<organism>
    <name type="scientific">Acidianus two-tailed virus</name>
    <name type="common">ATV</name>
    <dbReference type="NCBI Taxonomy" id="315953"/>
    <lineage>
        <taxon>Viruses</taxon>
        <taxon>Viruses incertae sedis</taxon>
        <taxon>Bicaudaviridae</taxon>
        <taxon>Bicaudavirus</taxon>
    </lineage>
</organism>
<protein>
    <recommendedName>
        <fullName>Putative transmembrane protein ORF1334</fullName>
    </recommendedName>
</protein>
<accession>Q3V4P9</accession>
<sequence>MFSLISLSHEESAESANKYVWRVSLWVESERQTPPSEVFLPFFRVEYMKVRKVSIVVLVLTLFIIPVIIPPAHSSINTSTTYATAYVGETSISSEPFILDVANLPWLNPQGSNIRFFEYSNLTGQLYAYEQLFSKTTWTVNTVESTGWETLPYWQNGQLVFNCPSAPHGGQYIAWRYTPSSNTFNVTIHITSWPSGINNPYSPGIAIYSPTVGDQPTDIGTSGFLALLVTFNGQIWYHETNGNWVELSVVYPTPSTAYPFTFTVTFTENSAGNVTVSTVYINSTAYTVNVNTPFPWSQIGYVGIRGDIDNLFYVSYFAVSPSPFVNSVESTDWKTLPYWQNGELVINGTGASAGGQYIAWRFTPSSNTFNVTIHITSWPSGISGGTYPGIEIFSPNVGNQPYAQASGFLALLVTFNGNIWYHGISGISGCDLLKSSAYPTPSTAYPFTFTVTFTENSAGNVTVSTVYINSTAHTVNLNTPFPWSQIGYIGITSCYDLFYVSYFAVSPSPFVNSVESTDWKTLPYWQNGQLVFNVTGASGSQYIAWRYTPVGNTINVTIHITSFPSGIPSGDNPGIEIFSPNVGDQPYDEVSGFLSLLVAFNGNIWYHGLNGFVLLKSSAFPTPSTAYPFTFTVTFTENSAGNVTVSTVYINSTAYTLNFNTPFPWSQIGYIGIRGDPSNLFYVSYFSTTQQLYAYELVTNPYTNTPYTGTVYMAIFPYPISYDVYVSQAPIVYSQATLPLVTVSSPSQVTTQYPIISTSTYMVIPSIGAYSGNTPLFLYPQMAVSEGIVPVIPMVESTSWKTLPYWQNGQLVLDVAAACSSQYVAWRYTPSSNTMNVTIHITSYPSGIQYNPGISIYSPNIGDQPYDYASGFLALLVTFSGNIWYHGTNANWVELRSSAYPTPSTAYPFTFTVTFTENSAGNVTISTVYINSTAYTLNVNTPFPWSQIGYVAIRVDTQNLFYVSYFSISQGSSPFVLVSPSYAQGFVGSQYAYPYFMNTTTVLVNNTAVPKGLSVFSGYMPGANTVFSTFLYMNTTPQSPVLVLMPAPYVSFNALSNGFSITADAQILSLYGYPATYTNPSFTYTPPGIIGMSGTNTFTFKGAQTQLSASTTPPSSTTPTPPSSSSSSSSSSSISTSPNTIQVVLNGSVYVHVPLLFHPALSTPNGSVLFSTSVNSTGVYISSYVTSAITTPLNVTIEYTNGTVIKSFTIEPGQTFQVPLVNGDENVIISYGNHTVTIPISANNVNVLSLRNAISAVLPPIYALPLFLLFAGSFFISLAVRSVPKFAGMGSIIYIFFVAPFLIVIGIPTSVVYGTVVGALIIIIIGLWASRSQD</sequence>
<evidence type="ECO:0000255" key="1"/>
<evidence type="ECO:0000256" key="2">
    <source>
        <dbReference type="SAM" id="MobiDB-lite"/>
    </source>
</evidence>
<evidence type="ECO:0000305" key="3"/>
<keyword id="KW-1043">Host membrane</keyword>
<keyword id="KW-0472">Membrane</keyword>
<keyword id="KW-1185">Reference proteome</keyword>
<keyword id="KW-0812">Transmembrane</keyword>
<keyword id="KW-1133">Transmembrane helix</keyword>
<name>Y1334_ATV</name>
<dbReference type="EMBL" id="AJ888457">
    <property type="protein sequence ID" value="CAI59915.1"/>
    <property type="molecule type" value="Genomic_DNA"/>
</dbReference>
<dbReference type="RefSeq" id="YP_319902.1">
    <property type="nucleotide sequence ID" value="NC_007409.1"/>
</dbReference>
<dbReference type="GeneID" id="4484271"/>
<dbReference type="KEGG" id="vg:4484271"/>
<dbReference type="Proteomes" id="UP000002150">
    <property type="component" value="Genome"/>
</dbReference>
<dbReference type="GO" id="GO:0033644">
    <property type="term" value="C:host cell membrane"/>
    <property type="evidence" value="ECO:0007669"/>
    <property type="project" value="UniProtKB-SubCell"/>
</dbReference>
<dbReference type="GO" id="GO:0016020">
    <property type="term" value="C:membrane"/>
    <property type="evidence" value="ECO:0007669"/>
    <property type="project" value="UniProtKB-KW"/>
</dbReference>
<reference key="1">
    <citation type="journal article" date="2005" name="Nature">
        <title>Virology: independent virus development outside a host.</title>
        <authorList>
            <person name="Haring M."/>
            <person name="Vestergaard G."/>
            <person name="Rachel R."/>
            <person name="Chen L."/>
            <person name="Garrett R.A."/>
            <person name="Prangishvili D."/>
        </authorList>
    </citation>
    <scope>NUCLEOTIDE SEQUENCE [GENOMIC DNA]</scope>
</reference>
<comment type="subcellular location">
    <subcellularLocation>
        <location evidence="3">Host membrane</location>
        <topology evidence="3">Multi-pass membrane protein</topology>
    </subcellularLocation>
</comment>
<organismHost>
    <name type="scientific">Acidianus convivator</name>
    <dbReference type="NCBI Taxonomy" id="269667"/>
</organismHost>
<proteinExistence type="predicted"/>
<feature type="chain" id="PRO_0000389048" description="Putative transmembrane protein ORF1334">
    <location>
        <begin position="1"/>
        <end position="1334"/>
    </location>
</feature>
<feature type="transmembrane region" description="Helical" evidence="1">
    <location>
        <begin position="53"/>
        <end position="73"/>
    </location>
</feature>
<feature type="transmembrane region" description="Helical" evidence="1">
    <location>
        <begin position="1256"/>
        <end position="1276"/>
    </location>
</feature>
<feature type="transmembrane region" description="Helical" evidence="1">
    <location>
        <begin position="1292"/>
        <end position="1312"/>
    </location>
</feature>
<feature type="transmembrane region" description="Helical" evidence="1">
    <location>
        <begin position="1313"/>
        <end position="1333"/>
    </location>
</feature>
<feature type="region of interest" description="Disordered" evidence="2">
    <location>
        <begin position="1107"/>
        <end position="1135"/>
    </location>
</feature>
<feature type="compositionally biased region" description="Low complexity" evidence="2">
    <location>
        <begin position="1110"/>
        <end position="1135"/>
    </location>
</feature>